<keyword id="KW-0010">Activator</keyword>
<keyword id="KW-0963">Cytoplasm</keyword>
<keyword id="KW-0678">Repressor</keyword>
<keyword id="KW-0694">RNA-binding</keyword>
<keyword id="KW-0810">Translation regulation</keyword>
<feature type="chain" id="PRO_0000177047" description="Translational regulator CsrA">
    <location>
        <begin position="1"/>
        <end position="70"/>
    </location>
</feature>
<protein>
    <recommendedName>
        <fullName evidence="1">Translational regulator CsrA</fullName>
    </recommendedName>
    <alternativeName>
        <fullName evidence="1">Carbon storage regulator</fullName>
    </alternativeName>
</protein>
<accession>Q6FCT4</accession>
<sequence length="70" mass="7866">MLILTRRVGETLMIGDQVSVTVLGVKGNQVRIGVNAPKEVSVHREEIYQRIQHERAMHVILAKIMDSTSL</sequence>
<dbReference type="EMBL" id="CR543861">
    <property type="protein sequence ID" value="CAG68125.1"/>
    <property type="molecule type" value="Genomic_DNA"/>
</dbReference>
<dbReference type="RefSeq" id="WP_011182242.1">
    <property type="nucleotide sequence ID" value="NC_005966.1"/>
</dbReference>
<dbReference type="SMR" id="Q6FCT4"/>
<dbReference type="STRING" id="202950.GCA_001485005_01016"/>
<dbReference type="GeneID" id="45233675"/>
<dbReference type="KEGG" id="aci:ACIAD1251"/>
<dbReference type="eggNOG" id="COG1551">
    <property type="taxonomic scope" value="Bacteria"/>
</dbReference>
<dbReference type="HOGENOM" id="CLU_164837_2_1_6"/>
<dbReference type="OrthoDB" id="9809061at2"/>
<dbReference type="BioCyc" id="ASP62977:ACIAD_RS05760-MONOMER"/>
<dbReference type="Proteomes" id="UP000000430">
    <property type="component" value="Chromosome"/>
</dbReference>
<dbReference type="GO" id="GO:0005829">
    <property type="term" value="C:cytosol"/>
    <property type="evidence" value="ECO:0007669"/>
    <property type="project" value="TreeGrafter"/>
</dbReference>
<dbReference type="GO" id="GO:0048027">
    <property type="term" value="F:mRNA 5'-UTR binding"/>
    <property type="evidence" value="ECO:0007669"/>
    <property type="project" value="UniProtKB-UniRule"/>
</dbReference>
<dbReference type="GO" id="GO:0006402">
    <property type="term" value="P:mRNA catabolic process"/>
    <property type="evidence" value="ECO:0007669"/>
    <property type="project" value="InterPro"/>
</dbReference>
<dbReference type="GO" id="GO:0045947">
    <property type="term" value="P:negative regulation of translational initiation"/>
    <property type="evidence" value="ECO:0007669"/>
    <property type="project" value="UniProtKB-UniRule"/>
</dbReference>
<dbReference type="GO" id="GO:0045948">
    <property type="term" value="P:positive regulation of translational initiation"/>
    <property type="evidence" value="ECO:0007669"/>
    <property type="project" value="UniProtKB-UniRule"/>
</dbReference>
<dbReference type="GO" id="GO:0006109">
    <property type="term" value="P:regulation of carbohydrate metabolic process"/>
    <property type="evidence" value="ECO:0007669"/>
    <property type="project" value="UniProtKB-UniRule"/>
</dbReference>
<dbReference type="FunFam" id="2.60.40.4380:FF:000001">
    <property type="entry name" value="Translational regulator CsrA"/>
    <property type="match status" value="1"/>
</dbReference>
<dbReference type="Gene3D" id="2.60.40.4380">
    <property type="entry name" value="Translational regulator CsrA"/>
    <property type="match status" value="1"/>
</dbReference>
<dbReference type="HAMAP" id="MF_00167">
    <property type="entry name" value="CsrA"/>
    <property type="match status" value="1"/>
</dbReference>
<dbReference type="InterPro" id="IPR003751">
    <property type="entry name" value="CsrA"/>
</dbReference>
<dbReference type="InterPro" id="IPR036107">
    <property type="entry name" value="CsrA_sf"/>
</dbReference>
<dbReference type="NCBIfam" id="TIGR00202">
    <property type="entry name" value="csrA"/>
    <property type="match status" value="1"/>
</dbReference>
<dbReference type="NCBIfam" id="NF002469">
    <property type="entry name" value="PRK01712.1"/>
    <property type="match status" value="1"/>
</dbReference>
<dbReference type="PANTHER" id="PTHR34984">
    <property type="entry name" value="CARBON STORAGE REGULATOR"/>
    <property type="match status" value="1"/>
</dbReference>
<dbReference type="PANTHER" id="PTHR34984:SF1">
    <property type="entry name" value="CARBON STORAGE REGULATOR"/>
    <property type="match status" value="1"/>
</dbReference>
<dbReference type="Pfam" id="PF02599">
    <property type="entry name" value="CsrA"/>
    <property type="match status" value="1"/>
</dbReference>
<dbReference type="SUPFAM" id="SSF117130">
    <property type="entry name" value="CsrA-like"/>
    <property type="match status" value="1"/>
</dbReference>
<comment type="function">
    <text evidence="1">A key translational regulator that binds mRNA to regulate translation initiation and/or mRNA stability. Mediates global changes in gene expression, shifting from rapid growth to stress survival by linking envelope stress, the stringent response and the catabolite repression systems. Usually binds in the 5'-UTR; binding at or near the Shine-Dalgarno sequence prevents ribosome-binding, repressing translation, binding elsewhere in the 5'-UTR can activate translation and/or stabilize the mRNA. Its function is antagonized by small RNA(s).</text>
</comment>
<comment type="subunit">
    <text evidence="1">Homodimer; the beta-strands of each monomer intercalate to form a hydrophobic core, while the alpha-helices form wings that extend away from the core.</text>
</comment>
<comment type="subcellular location">
    <subcellularLocation>
        <location evidence="1">Cytoplasm</location>
    </subcellularLocation>
</comment>
<comment type="similarity">
    <text evidence="1">Belongs to the CsrA/RsmA family.</text>
</comment>
<organism>
    <name type="scientific">Acinetobacter baylyi (strain ATCC 33305 / BD413 / ADP1)</name>
    <dbReference type="NCBI Taxonomy" id="62977"/>
    <lineage>
        <taxon>Bacteria</taxon>
        <taxon>Pseudomonadati</taxon>
        <taxon>Pseudomonadota</taxon>
        <taxon>Gammaproteobacteria</taxon>
        <taxon>Moraxellales</taxon>
        <taxon>Moraxellaceae</taxon>
        <taxon>Acinetobacter</taxon>
    </lineage>
</organism>
<name>CSRA_ACIAD</name>
<evidence type="ECO:0000255" key="1">
    <source>
        <dbReference type="HAMAP-Rule" id="MF_00167"/>
    </source>
</evidence>
<proteinExistence type="inferred from homology"/>
<reference key="1">
    <citation type="journal article" date="2004" name="Nucleic Acids Res.">
        <title>Unique features revealed by the genome sequence of Acinetobacter sp. ADP1, a versatile and naturally transformation competent bacterium.</title>
        <authorList>
            <person name="Barbe V."/>
            <person name="Vallenet D."/>
            <person name="Fonknechten N."/>
            <person name="Kreimeyer A."/>
            <person name="Oztas S."/>
            <person name="Labarre L."/>
            <person name="Cruveiller S."/>
            <person name="Robert C."/>
            <person name="Duprat S."/>
            <person name="Wincker P."/>
            <person name="Ornston L.N."/>
            <person name="Weissenbach J."/>
            <person name="Marliere P."/>
            <person name="Cohen G.N."/>
            <person name="Medigue C."/>
        </authorList>
    </citation>
    <scope>NUCLEOTIDE SEQUENCE [LARGE SCALE GENOMIC DNA]</scope>
    <source>
        <strain>ATCC 33305 / BD413 / ADP1</strain>
    </source>
</reference>
<gene>
    <name evidence="1" type="primary">csrA</name>
    <name type="ordered locus">ACIAD1251</name>
</gene>